<keyword id="KW-0328">Glycosyltransferase</keyword>
<keyword id="KW-0460">Magnesium</keyword>
<keyword id="KW-0665">Pyrimidine biosynthesis</keyword>
<keyword id="KW-1185">Reference proteome</keyword>
<keyword id="KW-0808">Transferase</keyword>
<comment type="function">
    <text evidence="1">Catalyzes the transfer of a ribosyl phosphate group from 5-phosphoribose 1-diphosphate to orotate, leading to the formation of orotidine monophosphate (OMP).</text>
</comment>
<comment type="catalytic activity">
    <reaction evidence="1">
        <text>orotidine 5'-phosphate + diphosphate = orotate + 5-phospho-alpha-D-ribose 1-diphosphate</text>
        <dbReference type="Rhea" id="RHEA:10380"/>
        <dbReference type="ChEBI" id="CHEBI:30839"/>
        <dbReference type="ChEBI" id="CHEBI:33019"/>
        <dbReference type="ChEBI" id="CHEBI:57538"/>
        <dbReference type="ChEBI" id="CHEBI:58017"/>
        <dbReference type="EC" id="2.4.2.10"/>
    </reaction>
</comment>
<comment type="cofactor">
    <cofactor evidence="1">
        <name>Mg(2+)</name>
        <dbReference type="ChEBI" id="CHEBI:18420"/>
    </cofactor>
</comment>
<comment type="pathway">
    <text evidence="1">Pyrimidine metabolism; UMP biosynthesis via de novo pathway; UMP from orotate: step 1/2.</text>
</comment>
<comment type="subunit">
    <text evidence="1">Homodimer.</text>
</comment>
<comment type="similarity">
    <text evidence="1">Belongs to the purine/pyrimidine phosphoribosyltransferase family. PyrE subfamily.</text>
</comment>
<feature type="chain" id="PRO_0000110745" description="Orotate phosphoribosyltransferase">
    <location>
        <begin position="1"/>
        <end position="203"/>
    </location>
</feature>
<feature type="binding site" evidence="1">
    <location>
        <position position="94"/>
    </location>
    <ligand>
        <name>5-phospho-alpha-D-ribose 1-diphosphate</name>
        <dbReference type="ChEBI" id="CHEBI:58017"/>
        <note>ligand shared between dimeric partners</note>
    </ligand>
</feature>
<feature type="binding site" evidence="1">
    <location>
        <position position="98"/>
    </location>
    <ligand>
        <name>5-phospho-alpha-D-ribose 1-diphosphate</name>
        <dbReference type="ChEBI" id="CHEBI:58017"/>
        <note>ligand shared between dimeric partners</note>
    </ligand>
</feature>
<feature type="binding site" evidence="1">
    <location>
        <position position="100"/>
    </location>
    <ligand>
        <name>5-phospho-alpha-D-ribose 1-diphosphate</name>
        <dbReference type="ChEBI" id="CHEBI:58017"/>
        <note>ligand shared between dimeric partners</note>
    </ligand>
</feature>
<feature type="binding site" description="in other chain" evidence="1">
    <location>
        <begin position="120"/>
        <end position="128"/>
    </location>
    <ligand>
        <name>5-phospho-alpha-D-ribose 1-diphosphate</name>
        <dbReference type="ChEBI" id="CHEBI:58017"/>
        <note>ligand shared between dimeric partners</note>
    </ligand>
</feature>
<feature type="binding site" evidence="1">
    <location>
        <position position="124"/>
    </location>
    <ligand>
        <name>orotate</name>
        <dbReference type="ChEBI" id="CHEBI:30839"/>
    </ligand>
</feature>
<dbReference type="EC" id="2.4.2.10" evidence="1"/>
<dbReference type="EMBL" id="AP008934">
    <property type="protein sequence ID" value="BAE18712.1"/>
    <property type="molecule type" value="Genomic_DNA"/>
</dbReference>
<dbReference type="RefSeq" id="WP_011303309.1">
    <property type="nucleotide sequence ID" value="NZ_MTGA01000034.1"/>
</dbReference>
<dbReference type="SMR" id="Q49WY6"/>
<dbReference type="GeneID" id="3615311"/>
<dbReference type="KEGG" id="ssp:SSP1567"/>
<dbReference type="PATRIC" id="fig|342451.11.peg.1569"/>
<dbReference type="eggNOG" id="COG0461">
    <property type="taxonomic scope" value="Bacteria"/>
</dbReference>
<dbReference type="HOGENOM" id="CLU_074878_1_1_9"/>
<dbReference type="OrthoDB" id="9802134at2"/>
<dbReference type="UniPathway" id="UPA00070">
    <property type="reaction ID" value="UER00119"/>
</dbReference>
<dbReference type="Proteomes" id="UP000006371">
    <property type="component" value="Chromosome"/>
</dbReference>
<dbReference type="GO" id="GO:0000287">
    <property type="term" value="F:magnesium ion binding"/>
    <property type="evidence" value="ECO:0007669"/>
    <property type="project" value="UniProtKB-UniRule"/>
</dbReference>
<dbReference type="GO" id="GO:0004588">
    <property type="term" value="F:orotate phosphoribosyltransferase activity"/>
    <property type="evidence" value="ECO:0007669"/>
    <property type="project" value="UniProtKB-UniRule"/>
</dbReference>
<dbReference type="GO" id="GO:0044205">
    <property type="term" value="P:'de novo' UMP biosynthetic process"/>
    <property type="evidence" value="ECO:0007669"/>
    <property type="project" value="UniProtKB-UniRule"/>
</dbReference>
<dbReference type="GO" id="GO:0019856">
    <property type="term" value="P:pyrimidine nucleobase biosynthetic process"/>
    <property type="evidence" value="ECO:0007669"/>
    <property type="project" value="TreeGrafter"/>
</dbReference>
<dbReference type="CDD" id="cd06223">
    <property type="entry name" value="PRTases_typeI"/>
    <property type="match status" value="1"/>
</dbReference>
<dbReference type="Gene3D" id="3.40.50.2020">
    <property type="match status" value="1"/>
</dbReference>
<dbReference type="HAMAP" id="MF_01208">
    <property type="entry name" value="PyrE"/>
    <property type="match status" value="1"/>
</dbReference>
<dbReference type="InterPro" id="IPR023031">
    <property type="entry name" value="OPRT"/>
</dbReference>
<dbReference type="InterPro" id="IPR004467">
    <property type="entry name" value="Or_phspho_trans_dom"/>
</dbReference>
<dbReference type="InterPro" id="IPR000836">
    <property type="entry name" value="PRibTrfase_dom"/>
</dbReference>
<dbReference type="InterPro" id="IPR029057">
    <property type="entry name" value="PRTase-like"/>
</dbReference>
<dbReference type="NCBIfam" id="TIGR00336">
    <property type="entry name" value="pyrE"/>
    <property type="match status" value="1"/>
</dbReference>
<dbReference type="PANTHER" id="PTHR19278">
    <property type="entry name" value="OROTATE PHOSPHORIBOSYLTRANSFERASE"/>
    <property type="match status" value="1"/>
</dbReference>
<dbReference type="PANTHER" id="PTHR19278:SF9">
    <property type="entry name" value="URIDINE 5'-MONOPHOSPHATE SYNTHASE"/>
    <property type="match status" value="1"/>
</dbReference>
<dbReference type="Pfam" id="PF00156">
    <property type="entry name" value="Pribosyltran"/>
    <property type="match status" value="1"/>
</dbReference>
<dbReference type="SUPFAM" id="SSF53271">
    <property type="entry name" value="PRTase-like"/>
    <property type="match status" value="1"/>
</dbReference>
<dbReference type="PROSITE" id="PS00103">
    <property type="entry name" value="PUR_PYR_PR_TRANSFER"/>
    <property type="match status" value="1"/>
</dbReference>
<organism>
    <name type="scientific">Staphylococcus saprophyticus subsp. saprophyticus (strain ATCC 15305 / DSM 20229 / NCIMB 8711 / NCTC 7292 / S-41)</name>
    <dbReference type="NCBI Taxonomy" id="342451"/>
    <lineage>
        <taxon>Bacteria</taxon>
        <taxon>Bacillati</taxon>
        <taxon>Bacillota</taxon>
        <taxon>Bacilli</taxon>
        <taxon>Bacillales</taxon>
        <taxon>Staphylococcaceae</taxon>
        <taxon>Staphylococcus</taxon>
    </lineage>
</organism>
<proteinExistence type="inferred from homology"/>
<name>PYRE_STAS1</name>
<evidence type="ECO:0000255" key="1">
    <source>
        <dbReference type="HAMAP-Rule" id="MF_01208"/>
    </source>
</evidence>
<reference key="1">
    <citation type="journal article" date="2005" name="Proc. Natl. Acad. Sci. U.S.A.">
        <title>Whole genome sequence of Staphylococcus saprophyticus reveals the pathogenesis of uncomplicated urinary tract infection.</title>
        <authorList>
            <person name="Kuroda M."/>
            <person name="Yamashita A."/>
            <person name="Hirakawa H."/>
            <person name="Kumano M."/>
            <person name="Morikawa K."/>
            <person name="Higashide M."/>
            <person name="Maruyama A."/>
            <person name="Inose Y."/>
            <person name="Matoba K."/>
            <person name="Toh H."/>
            <person name="Kuhara S."/>
            <person name="Hattori M."/>
            <person name="Ohta T."/>
        </authorList>
    </citation>
    <scope>NUCLEOTIDE SEQUENCE [LARGE SCALE GENOMIC DNA]</scope>
    <source>
        <strain>ATCC 15305 / DSM 20229 / NCIMB 8711 / NCTC 7292 / S-41</strain>
    </source>
</reference>
<protein>
    <recommendedName>
        <fullName evidence="1">Orotate phosphoribosyltransferase</fullName>
        <shortName evidence="1">OPRT</shortName>
        <shortName evidence="1">OPRTase</shortName>
        <ecNumber evidence="1">2.4.2.10</ecNumber>
    </recommendedName>
</protein>
<sequence>MAKAIAKALLEIEAVSLSPNDPFTWSSGIKSPIYCDNRVTLGYPEVRQHIRDGLCDLIETYFGDVEIVSGTATAGIPHAAYVSEKLALPMNYVRSKSKSHGKQNQIEGALSKGKKVVVIEDLISTGGSSITAVEALREAGADVIGVVAIFTYGLKKADEQFKQAQMPLYTLSNYNELIDVAKENGEISDNDIRSLVDWRDNLS</sequence>
<accession>Q49WY6</accession>
<gene>
    <name evidence="1" type="primary">pyrE</name>
    <name type="ordered locus">SSP1567</name>
</gene>